<evidence type="ECO:0000255" key="1"/>
<evidence type="ECO:0000256" key="2">
    <source>
        <dbReference type="SAM" id="MobiDB-lite"/>
    </source>
</evidence>
<evidence type="ECO:0000269" key="3">
    <source>
    </source>
</evidence>
<evidence type="ECO:0000305" key="4"/>
<name>ELHL_APLCA</name>
<keyword id="KW-0027">Amidation</keyword>
<keyword id="KW-0165">Cleavage on pair of basic residues</keyword>
<keyword id="KW-0903">Direct protein sequencing</keyword>
<keyword id="KW-0527">Neuropeptide</keyword>
<keyword id="KW-0964">Secreted</keyword>
<keyword id="KW-0732">Signal</keyword>
<sequence length="122" mass="13619">MKANTMFIILCLTLSTLCVSSQFTSVLGKIFVTNRAVKSSSYEKYPFDLSKEDGAQPYFMTPRLRFYPIGKRAAGGMEQSEGQNPETKSHSWRERSVLTPSLLSLGESLESGISKRISINQD</sequence>
<dbReference type="EMBL" id="J01018">
    <property type="status" value="NOT_ANNOTATED_CDS"/>
    <property type="molecule type" value="Genomic_DNA"/>
</dbReference>
<dbReference type="PIR" id="A01631">
    <property type="entry name" value="GOGABA"/>
</dbReference>
<dbReference type="EnsemblMetazoa" id="XM_013089688.2">
    <property type="protein sequence ID" value="XP_012945142.1"/>
    <property type="gene ID" value="LOC101852132"/>
</dbReference>
<dbReference type="Proteomes" id="UP000694888">
    <property type="component" value="Unplaced"/>
</dbReference>
<dbReference type="GO" id="GO:0005576">
    <property type="term" value="C:extracellular region"/>
    <property type="evidence" value="ECO:0007669"/>
    <property type="project" value="UniProtKB-SubCell"/>
</dbReference>
<dbReference type="GO" id="GO:0005179">
    <property type="term" value="F:hormone activity"/>
    <property type="evidence" value="ECO:0007669"/>
    <property type="project" value="InterPro"/>
</dbReference>
<dbReference type="GO" id="GO:0007218">
    <property type="term" value="P:neuropeptide signaling pathway"/>
    <property type="evidence" value="ECO:0007669"/>
    <property type="project" value="UniProtKB-KW"/>
</dbReference>
<dbReference type="InterPro" id="IPR003424">
    <property type="entry name" value="ELH"/>
</dbReference>
<dbReference type="Pfam" id="PF02323">
    <property type="entry name" value="ELH"/>
    <property type="match status" value="2"/>
</dbReference>
<proteinExistence type="evidence at protein level"/>
<feature type="signal peptide" evidence="1">
    <location>
        <begin position="1"/>
        <end position="21"/>
    </location>
</feature>
<feature type="propeptide" id="PRO_0000001810">
    <location>
        <begin position="22"/>
        <end position="34"/>
    </location>
</feature>
<feature type="peptide" id="PRO_0000001811" description="Atrial gland peptide B">
    <location>
        <begin position="36"/>
        <end position="69"/>
    </location>
</feature>
<feature type="propeptide" id="PRO_0000001812">
    <location>
        <begin position="73"/>
        <end position="122"/>
    </location>
</feature>
<feature type="region of interest" description="Disordered" evidence="2">
    <location>
        <begin position="74"/>
        <end position="95"/>
    </location>
</feature>
<feature type="modified residue" description="Isoleucine amide" evidence="3">
    <location>
        <position position="69"/>
    </location>
</feature>
<reference key="1">
    <citation type="journal article" date="1983" name="Cell">
        <title>A single gene encodes multiple neuropeptides mediating a stereotyped behavior.</title>
        <authorList>
            <person name="Scheller R.H."/>
            <person name="Jackson J.F."/>
            <person name="McAllister L.B."/>
            <person name="Rothman B.S."/>
            <person name="Mayeri E."/>
            <person name="Axel R."/>
        </authorList>
    </citation>
    <scope>NUCLEOTIDE SEQUENCE [GENOMIC DNA]</scope>
</reference>
<reference key="2">
    <citation type="journal article" date="1980" name="Proc. Natl. Acad. Sci. U.S.A.">
        <title>Purification and primary structure of two neuroactive peptides that cause bag cell afterdischarge and egg-laying in Aplysia.</title>
        <authorList>
            <person name="Heller E."/>
            <person name="Kaczmarek L.K."/>
            <person name="Hunkapiller M.W."/>
            <person name="Hood L.E."/>
            <person name="Strumwasser F."/>
        </authorList>
    </citation>
    <scope>PROTEIN SEQUENCE OF 36-69</scope>
    <scope>AMIDATION AT ILE-69</scope>
    <source>
        <tissue>Bag cell</tissue>
    </source>
</reference>
<comment type="function">
    <text>The atrial gland peptide A and peptide B precursors are the source of the 2 peptides that, upon release from this reproductive system gland, initiate the egg-laying process by exciting the bag cell neurons. These neurons, clustered in neural connectives near the abdominal ganglion, in turn release other peptides that act directly on the ganglion and also, via the circulating hemolymph, on many other organs to control the physiological processes of egg-laying. One of these other peptides is the egg-laying hormone.</text>
</comment>
<comment type="subcellular location">
    <subcellularLocation>
        <location>Secreted</location>
    </subcellularLocation>
</comment>
<comment type="similarity">
    <text evidence="4">Belongs to the molluscan ELH family.</text>
</comment>
<organism>
    <name type="scientific">Aplysia californica</name>
    <name type="common">California sea hare</name>
    <dbReference type="NCBI Taxonomy" id="6500"/>
    <lineage>
        <taxon>Eukaryota</taxon>
        <taxon>Metazoa</taxon>
        <taxon>Spiralia</taxon>
        <taxon>Lophotrochozoa</taxon>
        <taxon>Mollusca</taxon>
        <taxon>Gastropoda</taxon>
        <taxon>Heterobranchia</taxon>
        <taxon>Euthyneura</taxon>
        <taxon>Tectipleura</taxon>
        <taxon>Aplysiida</taxon>
        <taxon>Aplysioidea</taxon>
        <taxon>Aplysiidae</taxon>
        <taxon>Aplysia</taxon>
    </lineage>
</organism>
<accession>P01361</accession>
<protein>
    <recommendedName>
        <fullName>Atrial gland peptide B</fullName>
    </recommendedName>
    <alternativeName>
        <fullName>ELH-1L</fullName>
    </alternativeName>
</protein>